<feature type="transit peptide" description="Chloroplast" evidence="2">
    <location>
        <begin position="1"/>
        <end position="50"/>
    </location>
</feature>
<feature type="chain" id="PRO_0000030490" description="Large ribosomal subunit protein uL24c">
    <location>
        <begin position="51"/>
        <end position="194"/>
    </location>
</feature>
<keyword id="KW-0150">Chloroplast</keyword>
<keyword id="KW-0934">Plastid</keyword>
<keyword id="KW-0687">Ribonucleoprotein</keyword>
<keyword id="KW-0689">Ribosomal protein</keyword>
<keyword id="KW-0694">RNA-binding</keyword>
<keyword id="KW-0699">rRNA-binding</keyword>
<keyword id="KW-0809">Transit peptide</keyword>
<protein>
    <recommendedName>
        <fullName evidence="3">Large ribosomal subunit protein uL24c</fullName>
    </recommendedName>
    <alternativeName>
        <fullName>50S ribosomal protein L24, chloroplastic</fullName>
    </alternativeName>
    <alternativeName>
        <fullName>CL24</fullName>
    </alternativeName>
</protein>
<evidence type="ECO:0000250" key="1"/>
<evidence type="ECO:0000255" key="2"/>
<evidence type="ECO:0000305" key="3"/>
<name>RK24_PEA</name>
<accession>P11893</accession>
<proteinExistence type="evidence at transcript level"/>
<dbReference type="EMBL" id="X14020">
    <property type="protein sequence ID" value="CAA32185.1"/>
    <property type="molecule type" value="mRNA"/>
</dbReference>
<dbReference type="PIR" id="S04685">
    <property type="entry name" value="R5PM24"/>
</dbReference>
<dbReference type="SMR" id="P11893"/>
<dbReference type="EnsemblPlants" id="Psat5g249200.1">
    <property type="protein sequence ID" value="Psat5g249200.1.cds"/>
    <property type="gene ID" value="Psat5g249200"/>
</dbReference>
<dbReference type="Gramene" id="Psat5g249200.1">
    <property type="protein sequence ID" value="Psat5g249200.1.cds"/>
    <property type="gene ID" value="Psat5g249200"/>
</dbReference>
<dbReference type="OrthoDB" id="359154at2759"/>
<dbReference type="GO" id="GO:0009507">
    <property type="term" value="C:chloroplast"/>
    <property type="evidence" value="ECO:0007669"/>
    <property type="project" value="UniProtKB-SubCell"/>
</dbReference>
<dbReference type="GO" id="GO:1990904">
    <property type="term" value="C:ribonucleoprotein complex"/>
    <property type="evidence" value="ECO:0007669"/>
    <property type="project" value="UniProtKB-KW"/>
</dbReference>
<dbReference type="GO" id="GO:0005840">
    <property type="term" value="C:ribosome"/>
    <property type="evidence" value="ECO:0007669"/>
    <property type="project" value="UniProtKB-KW"/>
</dbReference>
<dbReference type="GO" id="GO:0019843">
    <property type="term" value="F:rRNA binding"/>
    <property type="evidence" value="ECO:0007669"/>
    <property type="project" value="UniProtKB-KW"/>
</dbReference>
<dbReference type="GO" id="GO:0003735">
    <property type="term" value="F:structural constituent of ribosome"/>
    <property type="evidence" value="ECO:0007669"/>
    <property type="project" value="InterPro"/>
</dbReference>
<dbReference type="GO" id="GO:0006412">
    <property type="term" value="P:translation"/>
    <property type="evidence" value="ECO:0007669"/>
    <property type="project" value="InterPro"/>
</dbReference>
<dbReference type="CDD" id="cd06089">
    <property type="entry name" value="KOW_RPL26"/>
    <property type="match status" value="1"/>
</dbReference>
<dbReference type="Gene3D" id="2.30.30.30">
    <property type="match status" value="1"/>
</dbReference>
<dbReference type="HAMAP" id="MF_01326_B">
    <property type="entry name" value="Ribosomal_uL24_B"/>
    <property type="match status" value="1"/>
</dbReference>
<dbReference type="InterPro" id="IPR005824">
    <property type="entry name" value="KOW"/>
</dbReference>
<dbReference type="InterPro" id="IPR014722">
    <property type="entry name" value="Rib_uL2_dom2"/>
</dbReference>
<dbReference type="InterPro" id="IPR003256">
    <property type="entry name" value="Ribosomal_uL24"/>
</dbReference>
<dbReference type="InterPro" id="IPR005825">
    <property type="entry name" value="Ribosomal_uL24_CS"/>
</dbReference>
<dbReference type="InterPro" id="IPR041988">
    <property type="entry name" value="Ribosomal_uL24_KOW"/>
</dbReference>
<dbReference type="InterPro" id="IPR008991">
    <property type="entry name" value="Translation_prot_SH3-like_sf"/>
</dbReference>
<dbReference type="NCBIfam" id="TIGR01079">
    <property type="entry name" value="rplX_bact"/>
    <property type="match status" value="1"/>
</dbReference>
<dbReference type="PANTHER" id="PTHR12903">
    <property type="entry name" value="MITOCHONDRIAL RIBOSOMAL PROTEIN L24"/>
    <property type="match status" value="1"/>
</dbReference>
<dbReference type="Pfam" id="PF00467">
    <property type="entry name" value="KOW"/>
    <property type="match status" value="1"/>
</dbReference>
<dbReference type="Pfam" id="PF17136">
    <property type="entry name" value="ribosomal_L24"/>
    <property type="match status" value="1"/>
</dbReference>
<dbReference type="SMART" id="SM00739">
    <property type="entry name" value="KOW"/>
    <property type="match status" value="1"/>
</dbReference>
<dbReference type="SUPFAM" id="SSF50104">
    <property type="entry name" value="Translation proteins SH3-like domain"/>
    <property type="match status" value="1"/>
</dbReference>
<dbReference type="PROSITE" id="PS01108">
    <property type="entry name" value="RIBOSOMAL_L24"/>
    <property type="match status" value="1"/>
</dbReference>
<reference key="1">
    <citation type="journal article" date="1988" name="Curr. Genet.">
        <title>Nucleotide sequences of cDNAs encoding four complete nuclear-encoded plastid ribosomal proteins.</title>
        <authorList>
            <person name="Gantt J.S."/>
        </authorList>
    </citation>
    <scope>NUCLEOTIDE SEQUENCE [MRNA]</scope>
    <source>
        <strain>cv. Little Marvel</strain>
        <tissue>Seedling</tissue>
    </source>
</reference>
<organism>
    <name type="scientific">Pisum sativum</name>
    <name type="common">Garden pea</name>
    <name type="synonym">Lathyrus oleraceus</name>
    <dbReference type="NCBI Taxonomy" id="3888"/>
    <lineage>
        <taxon>Eukaryota</taxon>
        <taxon>Viridiplantae</taxon>
        <taxon>Streptophyta</taxon>
        <taxon>Embryophyta</taxon>
        <taxon>Tracheophyta</taxon>
        <taxon>Spermatophyta</taxon>
        <taxon>Magnoliopsida</taxon>
        <taxon>eudicotyledons</taxon>
        <taxon>Gunneridae</taxon>
        <taxon>Pentapetalae</taxon>
        <taxon>rosids</taxon>
        <taxon>fabids</taxon>
        <taxon>Fabales</taxon>
        <taxon>Fabaceae</taxon>
        <taxon>Papilionoideae</taxon>
        <taxon>50 kb inversion clade</taxon>
        <taxon>NPAAA clade</taxon>
        <taxon>Hologalegina</taxon>
        <taxon>IRL clade</taxon>
        <taxon>Fabeae</taxon>
        <taxon>Pisum</taxon>
    </lineage>
</organism>
<gene>
    <name type="primary">RPL24</name>
</gene>
<comment type="function">
    <text evidence="1">One of two assembly initiator proteins, it binds directly to the 5'-end of the 23S rRNA, where it nucleates assembly of the 50S subunit.</text>
</comment>
<comment type="subunit">
    <text>Part of the 50S ribosomal subunit.</text>
</comment>
<comment type="subcellular location">
    <subcellularLocation>
        <location>Plastid</location>
        <location>Chloroplast</location>
    </subcellularLocation>
</comment>
<comment type="similarity">
    <text evidence="3">Belongs to the universal ribosomal protein uL24 family.</text>
</comment>
<sequence length="194" mass="21580">MVAMAMASLQSSMSSLSLSSNSFLGQPLSPITLSPFLQGKPTEKKCLIVMKLKRWERKECKPNSLPVLHKLHVKVGDTVKVISGHEKGQIGEITKIFKHNSSVIVKDINLKTKHVKSNQEGEPGQINKVEAPIHSSNVMLYSKEKDVTSRVGHKVLENGKRVRYLIKTGEIIDSEENWKKLKEANKKTAEVAAT</sequence>